<feature type="chain" id="PRO_0000116239" description="Protein U63">
    <location>
        <begin position="1"/>
        <end position="216"/>
    </location>
</feature>
<comment type="similarity">
    <text evidence="1">Belongs to the herpesviridae UL92 family.</text>
</comment>
<gene>
    <name type="primary">U63</name>
    <name type="synonym">9R</name>
</gene>
<protein>
    <recommendedName>
        <fullName>Protein U63</fullName>
    </recommendedName>
</protein>
<name>UL92_HHV6U</name>
<organismHost>
    <name type="scientific">Homo sapiens</name>
    <name type="common">Human</name>
    <dbReference type="NCBI Taxonomy" id="9606"/>
</organismHost>
<organism>
    <name type="scientific">Human herpesvirus 6A (strain Uganda-1102)</name>
    <name type="common">HHV-6 variant A</name>
    <name type="synonym">Human B lymphotropic virus</name>
    <dbReference type="NCBI Taxonomy" id="10370"/>
    <lineage>
        <taxon>Viruses</taxon>
        <taxon>Duplodnaviria</taxon>
        <taxon>Heunggongvirae</taxon>
        <taxon>Peploviricota</taxon>
        <taxon>Herviviricetes</taxon>
        <taxon>Herpesvirales</taxon>
        <taxon>Orthoherpesviridae</taxon>
        <taxon>Betaherpesvirinae</taxon>
        <taxon>Roseolovirus</taxon>
        <taxon>Roseolovirus humanbeta6a</taxon>
        <taxon>Human betaherpesvirus 6A</taxon>
    </lineage>
</organism>
<dbReference type="EMBL" id="M68963">
    <property type="protein sequence ID" value="AAA65572.1"/>
    <property type="molecule type" value="Genomic_DNA"/>
</dbReference>
<dbReference type="EMBL" id="X83413">
    <property type="protein sequence ID" value="CAA58355.1"/>
    <property type="molecule type" value="Genomic_DNA"/>
</dbReference>
<dbReference type="PIR" id="I33560">
    <property type="entry name" value="QQBEH8"/>
</dbReference>
<dbReference type="RefSeq" id="NP_042956.1">
    <property type="nucleotide sequence ID" value="NC_001664.2"/>
</dbReference>
<dbReference type="DNASU" id="1487944"/>
<dbReference type="GeneID" id="1487944"/>
<dbReference type="KEGG" id="vg:1487944"/>
<dbReference type="Proteomes" id="UP000009295">
    <property type="component" value="Segment"/>
</dbReference>
<dbReference type="InterPro" id="IPR004289">
    <property type="entry name" value="Herpes_UL92"/>
</dbReference>
<dbReference type="Pfam" id="PF03048">
    <property type="entry name" value="Herpes_UL92"/>
    <property type="match status" value="1"/>
</dbReference>
<reference key="1">
    <citation type="journal article" date="1990" name="J. Virol.">
        <title>Human herpesvirus 6 is closely related to human cytomegalovirus.</title>
        <authorList>
            <person name="Lawrence G.L."/>
            <person name="Chee M."/>
            <person name="Craxton M.A."/>
            <person name="Gompels U.A."/>
            <person name="Honess R.W."/>
            <person name="Barrell B.G."/>
        </authorList>
    </citation>
    <scope>NUCLEOTIDE SEQUENCE [GENOMIC DNA]</scope>
</reference>
<reference key="2">
    <citation type="journal article" date="1995" name="Virology">
        <title>The DNA sequence of human herpesvirus-6: structure, coding content, and genome evolution.</title>
        <authorList>
            <person name="Gompels U.A."/>
            <person name="Nicholas J."/>
            <person name="Lawrence G.L."/>
            <person name="Jones M."/>
            <person name="Thomson B.J."/>
            <person name="Martin M.E.D."/>
            <person name="Efstathiou S."/>
            <person name="Craxton M.A."/>
            <person name="Macaulay H.A."/>
        </authorList>
    </citation>
    <scope>NUCLEOTIDE SEQUENCE [LARGE SCALE GENOMIC DNA]</scope>
</reference>
<evidence type="ECO:0000305" key="1"/>
<proteinExistence type="inferred from homology"/>
<keyword id="KW-1185">Reference proteome</keyword>
<accession>P24440</accession>
<sequence length="216" mass="24782">MELPRKYDRVTGRILTHKNNQMCTTECSQMYNLHNPITFELGLGNVFVCMRCLTVHHCDMQTDCTIVNTHEGYVCAKTGLFYSGWMPAYADCFLEPICEPNIETVNVVVVLLSYVYSFLMENKERYAAIIDSIIKDGKFIKNVEDAVFYTFNAVFTNSTFNKIPLTTISRLFVQLIIGGHAKGTIYDSNVIRVSRRKREDSLLKKMRLEYGNALIL</sequence>